<dbReference type="EC" id="2.1.4.1" evidence="2"/>
<dbReference type="EMBL" id="BC056747">
    <property type="protein sequence ID" value="AAH56747.1"/>
    <property type="molecule type" value="mRNA"/>
</dbReference>
<dbReference type="RefSeq" id="NP_955825.1">
    <property type="nucleotide sequence ID" value="NM_199531.1"/>
</dbReference>
<dbReference type="SMR" id="Q6PH19"/>
<dbReference type="FunCoup" id="Q6PH19">
    <property type="interactions" value="201"/>
</dbReference>
<dbReference type="STRING" id="7955.ENSDARP00000052640"/>
<dbReference type="PaxDb" id="7955-ENSDARP00000052640"/>
<dbReference type="GeneID" id="266799"/>
<dbReference type="KEGG" id="dre:266799"/>
<dbReference type="AGR" id="ZFIN:ZDB-GENE-021015-1"/>
<dbReference type="CTD" id="2628"/>
<dbReference type="ZFIN" id="ZDB-GENE-021015-1">
    <property type="gene designation" value="gatm"/>
</dbReference>
<dbReference type="eggNOG" id="ENOG502QVCA">
    <property type="taxonomic scope" value="Eukaryota"/>
</dbReference>
<dbReference type="InParanoid" id="Q6PH19"/>
<dbReference type="OrthoDB" id="10264242at2759"/>
<dbReference type="PhylomeDB" id="Q6PH19"/>
<dbReference type="Reactome" id="R-DRE-71288">
    <property type="pathway name" value="Creatine metabolism"/>
</dbReference>
<dbReference type="UniPathway" id="UPA00104">
    <property type="reaction ID" value="UER00579"/>
</dbReference>
<dbReference type="PRO" id="PR:Q6PH19"/>
<dbReference type="Proteomes" id="UP000000437">
    <property type="component" value="Chromosome 18"/>
</dbReference>
<dbReference type="GO" id="GO:0005743">
    <property type="term" value="C:mitochondrial inner membrane"/>
    <property type="evidence" value="ECO:0007669"/>
    <property type="project" value="UniProtKB-SubCell"/>
</dbReference>
<dbReference type="GO" id="GO:0005758">
    <property type="term" value="C:mitochondrial intermembrane space"/>
    <property type="evidence" value="ECO:0000318"/>
    <property type="project" value="GO_Central"/>
</dbReference>
<dbReference type="GO" id="GO:0015068">
    <property type="term" value="F:glycine amidinotransferase activity"/>
    <property type="evidence" value="ECO:0000250"/>
    <property type="project" value="UniProtKB"/>
</dbReference>
<dbReference type="GO" id="GO:0006601">
    <property type="term" value="P:creatine biosynthetic process"/>
    <property type="evidence" value="ECO:0000318"/>
    <property type="project" value="GO_Central"/>
</dbReference>
<dbReference type="CDD" id="cd21136">
    <property type="entry name" value="amidinotransferase_AGAT-like"/>
    <property type="match status" value="1"/>
</dbReference>
<dbReference type="FunFam" id="3.75.10.10:FF:000005">
    <property type="entry name" value="Glycine amidinotransferase, mitochondrial"/>
    <property type="match status" value="1"/>
</dbReference>
<dbReference type="Gene3D" id="3.75.10.10">
    <property type="entry name" value="L-arginine/glycine Amidinotransferase, Chain A"/>
    <property type="match status" value="1"/>
</dbReference>
<dbReference type="InterPro" id="IPR033195">
    <property type="entry name" value="AmidinoTrfase"/>
</dbReference>
<dbReference type="PANTHER" id="PTHR10488">
    <property type="entry name" value="GLYCINE AMIDINOTRANSFERASE, MITOCHONDRIAL"/>
    <property type="match status" value="1"/>
</dbReference>
<dbReference type="PANTHER" id="PTHR10488:SF1">
    <property type="entry name" value="GLYCINE AMIDINOTRANSFERASE, MITOCHONDRIAL"/>
    <property type="match status" value="1"/>
</dbReference>
<dbReference type="SUPFAM" id="SSF55909">
    <property type="entry name" value="Pentein"/>
    <property type="match status" value="1"/>
</dbReference>
<gene>
    <name evidence="8" type="primary">gatm</name>
</gene>
<organism>
    <name type="scientific">Danio rerio</name>
    <name type="common">Zebrafish</name>
    <name type="synonym">Brachydanio rerio</name>
    <dbReference type="NCBI Taxonomy" id="7955"/>
    <lineage>
        <taxon>Eukaryota</taxon>
        <taxon>Metazoa</taxon>
        <taxon>Chordata</taxon>
        <taxon>Craniata</taxon>
        <taxon>Vertebrata</taxon>
        <taxon>Euteleostomi</taxon>
        <taxon>Actinopterygii</taxon>
        <taxon>Neopterygii</taxon>
        <taxon>Teleostei</taxon>
        <taxon>Ostariophysi</taxon>
        <taxon>Cypriniformes</taxon>
        <taxon>Danionidae</taxon>
        <taxon>Danioninae</taxon>
        <taxon>Danio</taxon>
    </lineage>
</organism>
<accession>Q6PH19</accession>
<feature type="transit peptide" description="Mitochondrion" evidence="3">
    <location>
        <begin position="1"/>
        <end status="unknown"/>
    </location>
</feature>
<feature type="chain" id="PRO_0000399096" description="Glycine amidinotransferase, mitochondrial" evidence="3">
    <location>
        <begin status="unknown"/>
        <end position="422"/>
    </location>
</feature>
<feature type="active site" evidence="2">
    <location>
        <position position="253"/>
    </location>
</feature>
<feature type="active site" evidence="2">
    <location>
        <position position="302"/>
    </location>
</feature>
<feature type="active site" description="Amidino-cysteine intermediate" evidence="2">
    <location>
        <position position="406"/>
    </location>
</feature>
<reference evidence="8" key="1">
    <citation type="submission" date="2003-08" db="EMBL/GenBank/DDBJ databases">
        <authorList>
            <consortium name="NIH - Zebrafish Gene Collection (ZGC) project"/>
        </authorList>
    </citation>
    <scope>NUCLEOTIDE SEQUENCE [LARGE SCALE MRNA]</scope>
    <source>
        <tissue evidence="8">Embryo</tissue>
    </source>
</reference>
<reference evidence="7" key="2">
    <citation type="journal article" date="2007" name="Int. J. Dev. Biol.">
        <title>Spatiotemporal expression of the creatine metabolism related genes agat, gamt and ct1 during zebrafish embryogenesis.</title>
        <authorList>
            <person name="Wang L."/>
            <person name="Zhang Y."/>
            <person name="Shao M."/>
            <person name="Zhang H."/>
        </authorList>
    </citation>
    <scope>TISSUE SPECIFICITY</scope>
    <scope>DEVELOPMENTAL STAGE</scope>
</reference>
<reference evidence="7" key="3">
    <citation type="journal article" date="2010" name="J. Fish Biol.">
        <title>Expression patterns of the creatine metabolism-related molecules AGAT, GAMT and CT1 in adult zebrafish Danio rerio.</title>
        <authorList>
            <person name="Wang L."/>
            <person name="Chen D."/>
            <person name="Yang L."/>
            <person name="Huang S."/>
            <person name="Zhang Y."/>
            <person name="Zhang H."/>
        </authorList>
    </citation>
    <scope>TISSUE SPECIFICITY</scope>
    <scope>DEVELOPMENTAL STAGE</scope>
</reference>
<comment type="function">
    <text evidence="1">Catalyzes the biosynthesis of guanidinoacetate, the immediate precursor of creatine. Creatine plays a vital role in energy metabolism in muscle tissues. May play a role in embryonic and central nervous system development (By similarity).</text>
</comment>
<comment type="catalytic activity">
    <reaction evidence="2">
        <text>L-arginine + glycine = guanidinoacetate + L-ornithine</text>
        <dbReference type="Rhea" id="RHEA:13201"/>
        <dbReference type="ChEBI" id="CHEBI:32682"/>
        <dbReference type="ChEBI" id="CHEBI:46911"/>
        <dbReference type="ChEBI" id="CHEBI:57305"/>
        <dbReference type="ChEBI" id="CHEBI:57742"/>
        <dbReference type="EC" id="2.1.4.1"/>
    </reaction>
</comment>
<comment type="pathway">
    <text evidence="2">Amine and polyamine biosynthesis; creatine biosynthesis; creatine from L-arginine and glycine: step 1/2.</text>
</comment>
<comment type="subunit">
    <text evidence="2">Homodimer.</text>
</comment>
<comment type="subcellular location">
    <subcellularLocation>
        <location evidence="2">Mitochondrion inner membrane</location>
    </subcellularLocation>
</comment>
<comment type="tissue specificity">
    <text evidence="5 6">Strongly expressed in neurons and glia of the brain, the lamina propria, submucosa and serosa of the small intestine, in oocytes and on the fringes of the pancreas. Not expressed in the retina, eye lens, heart or bulbus arteriosus. Expressed in the yolk syncytial layer in gastrula stage embryos, in the yolk syncytial layer and mature somites in early segmentation embryos and in the yolk syncytial layer and the liver of long-pec stage (48 hours post-fertilization) embryos.</text>
</comment>
<comment type="developmental stage">
    <text evidence="5 6">Widely expressed during maturation of oocytes. Also expressed in embryos from gastrulation onwards in the yolk syncytial layer and somites. Expression declines in the somites, but is up-regulated in the yolk syncytial layer throughout embryonic development.</text>
</comment>
<comment type="similarity">
    <text evidence="4">Belongs to the amidinotransferase family.</text>
</comment>
<keyword id="KW-0472">Membrane</keyword>
<keyword id="KW-0496">Mitochondrion</keyword>
<keyword id="KW-0999">Mitochondrion inner membrane</keyword>
<keyword id="KW-1185">Reference proteome</keyword>
<keyword id="KW-0808">Transferase</keyword>
<keyword id="KW-0809">Transit peptide</keyword>
<sequence>MLRVRCLRGGSRGAEAAHLIGALVGRALSGRLSRASRSSSSSAAAQLPLSAHEQVPEPTAEECPVCAHNEWDPLEEVIVGRAENACVPPFTVEVKANTYEKYWPFYQQYGGQTFPKEHVQKAVAEIEEMCNILQHEGVTVRRPEPVDWSLEYRTPDFSSTGMYAAMPRDILMVVGNEIIEAPMAWRARFFEYRAYRPLIKEYFRRGARWTTAPKPTMADQLYDQDYPIRTVEDRHKLAAQGKFVTTEFEPCFDAADFIRAGTDIFVQRSQVTNYMGIEWMRRHLSPTYKIHIISFKDPNPMHIDATFNIIGPGLVLSNPDRPCRQIEMFKKAGWTVVTPPTPLIPDNHPLWMSSKWLSMNVLMLDEKRVMVDANESTIQKMFESLGIKTVKVSIRHANSLGGGFHCWTTDVRRRGTLQSYFL</sequence>
<name>GATM_DANRE</name>
<proteinExistence type="evidence at transcript level"/>
<evidence type="ECO:0000250" key="1"/>
<evidence type="ECO:0000250" key="2">
    <source>
        <dbReference type="UniProtKB" id="P50440"/>
    </source>
</evidence>
<evidence type="ECO:0000250" key="3">
    <source>
        <dbReference type="UniProtKB" id="P50441"/>
    </source>
</evidence>
<evidence type="ECO:0000255" key="4"/>
<evidence type="ECO:0000269" key="5">
    <source>
    </source>
</evidence>
<evidence type="ECO:0000269" key="6">
    <source>
    </source>
</evidence>
<evidence type="ECO:0000305" key="7"/>
<evidence type="ECO:0000312" key="8">
    <source>
        <dbReference type="EMBL" id="AAH56747.1"/>
    </source>
</evidence>
<protein>
    <recommendedName>
        <fullName evidence="2">Glycine amidinotransferase, mitochondrial</fullName>
        <ecNumber evidence="2">2.1.4.1</ecNumber>
    </recommendedName>
    <alternativeName>
        <fullName evidence="2">L-arginine:glycine amidinotransferase</fullName>
    </alternativeName>
    <alternativeName>
        <fullName evidence="2">Transamidinase</fullName>
    </alternativeName>
</protein>